<organism>
    <name type="scientific">Escherichia coli (strain K12)</name>
    <dbReference type="NCBI Taxonomy" id="83333"/>
    <lineage>
        <taxon>Bacteria</taxon>
        <taxon>Pseudomonadati</taxon>
        <taxon>Pseudomonadota</taxon>
        <taxon>Gammaproteobacteria</taxon>
        <taxon>Enterobacterales</taxon>
        <taxon>Enterobacteriaceae</taxon>
        <taxon>Escherichia</taxon>
    </lineage>
</organism>
<protein>
    <recommendedName>
        <fullName>Uncharacterized oxidoreductase YgcW</fullName>
        <ecNumber>1.-.-.-</ecNumber>
    </recommendedName>
</protein>
<sequence length="261" mass="28042">MSIESLNAFSMDFFSLKGKTAIVTGGNSGLGQAFAMALAKAGANIFIPSFVKDNGETKEMIEKQGVEVDFMQVGITAEGAPQKIIAACCERFGTVDILVNNAGICKLNKVLDFGRADWDPMIDVNLTAAFELSYEAAKIMIPQKSGKIINICSLFSYLGGQWSPAYSATKHALAGFTKAYCDELGQYNIQVNGIAPGYYATDITLATRSNPETNQRVLDHIPANRWGDTQDLMGAAVFLASPASNYVNGHLLVVDGGYLVR</sequence>
<accession>P76633</accession>
<accession>P78216</accession>
<accession>Q46913</accession>
<feature type="chain" id="PRO_0000054835" description="Uncharacterized oxidoreductase YgcW">
    <location>
        <begin position="1"/>
        <end position="261"/>
    </location>
</feature>
<feature type="active site" description="Proton acceptor" evidence="2">
    <location>
        <position position="166"/>
    </location>
</feature>
<feature type="binding site" evidence="1">
    <location>
        <begin position="22"/>
        <end position="46"/>
    </location>
    <ligand>
        <name>NADP(+)</name>
        <dbReference type="ChEBI" id="CHEBI:58349"/>
    </ligand>
</feature>
<feature type="binding site" evidence="1">
    <location>
        <position position="153"/>
    </location>
    <ligand>
        <name>substrate</name>
    </ligand>
</feature>
<keyword id="KW-0560">Oxidoreductase</keyword>
<keyword id="KW-1185">Reference proteome</keyword>
<evidence type="ECO:0000250" key="1"/>
<evidence type="ECO:0000255" key="2">
    <source>
        <dbReference type="PROSITE-ProRule" id="PRU10001"/>
    </source>
</evidence>
<evidence type="ECO:0000305" key="3"/>
<reference key="1">
    <citation type="journal article" date="1997" name="Science">
        <title>The complete genome sequence of Escherichia coli K-12.</title>
        <authorList>
            <person name="Blattner F.R."/>
            <person name="Plunkett G. III"/>
            <person name="Bloch C.A."/>
            <person name="Perna N.T."/>
            <person name="Burland V."/>
            <person name="Riley M."/>
            <person name="Collado-Vides J."/>
            <person name="Glasner J.D."/>
            <person name="Rode C.K."/>
            <person name="Mayhew G.F."/>
            <person name="Gregor J."/>
            <person name="Davis N.W."/>
            <person name="Kirkpatrick H.A."/>
            <person name="Goeden M.A."/>
            <person name="Rose D.J."/>
            <person name="Mau B."/>
            <person name="Shao Y."/>
        </authorList>
    </citation>
    <scope>NUCLEOTIDE SEQUENCE [LARGE SCALE GENOMIC DNA]</scope>
    <source>
        <strain>K12 / MG1655 / ATCC 47076</strain>
    </source>
</reference>
<reference key="2">
    <citation type="journal article" date="2006" name="Mol. Syst. Biol.">
        <title>Highly accurate genome sequences of Escherichia coli K-12 strains MG1655 and W3110.</title>
        <authorList>
            <person name="Hayashi K."/>
            <person name="Morooka N."/>
            <person name="Yamamoto Y."/>
            <person name="Fujita K."/>
            <person name="Isono K."/>
            <person name="Choi S."/>
            <person name="Ohtsubo E."/>
            <person name="Baba T."/>
            <person name="Wanner B.L."/>
            <person name="Mori H."/>
            <person name="Horiuchi T."/>
        </authorList>
    </citation>
    <scope>NUCLEOTIDE SEQUENCE [LARGE SCALE GENOMIC DNA]</scope>
    <source>
        <strain>K12 / W3110 / ATCC 27325 / DSM 5911</strain>
    </source>
</reference>
<reference key="3">
    <citation type="journal article" date="1997" name="DNA Res.">
        <title>Construction of a contiguous 874-kb sequence of the Escherichia coli-K12 genome corresponding to 50.0-68.8 min on the linkage map and analysis of its sequence features.</title>
        <authorList>
            <person name="Yamamoto Y."/>
            <person name="Aiba H."/>
            <person name="Baba T."/>
            <person name="Hayashi K."/>
            <person name="Inada T."/>
            <person name="Isono K."/>
            <person name="Itoh T."/>
            <person name="Kimura S."/>
            <person name="Kitagawa M."/>
            <person name="Makino K."/>
            <person name="Miki T."/>
            <person name="Mitsuhashi N."/>
            <person name="Mizobuchi K."/>
            <person name="Mori H."/>
            <person name="Nakade S."/>
            <person name="Nakamura Y."/>
            <person name="Nashimoto H."/>
            <person name="Oshima T."/>
            <person name="Oyama S."/>
            <person name="Saito N."/>
            <person name="Sampei G."/>
            <person name="Satoh Y."/>
            <person name="Sivasundaram S."/>
            <person name="Tagami H."/>
            <person name="Takahashi H."/>
            <person name="Takeda J."/>
            <person name="Takemoto K."/>
            <person name="Uehara K."/>
            <person name="Wada C."/>
            <person name="Yamagata S."/>
            <person name="Horiuchi T."/>
        </authorList>
    </citation>
    <scope>NUCLEOTIDE SEQUENCE [LARGE SCALE GENOMIC DNA] OF 1-117</scope>
    <source>
        <strain>K12 / W3110 / ATCC 27325 / DSM 5911</strain>
    </source>
</reference>
<proteinExistence type="inferred from homology"/>
<gene>
    <name type="primary">ygcW</name>
    <name type="ordered locus">b2774</name>
    <name type="ordered locus">JW5443</name>
</gene>
<dbReference type="EC" id="1.-.-.-"/>
<dbReference type="EMBL" id="U29579">
    <property type="protein sequence ID" value="AAA69285.1"/>
    <property type="status" value="ALT_INIT"/>
    <property type="molecule type" value="Genomic_DNA"/>
</dbReference>
<dbReference type="EMBL" id="U00096">
    <property type="protein sequence ID" value="AAC75816.2"/>
    <property type="molecule type" value="Genomic_DNA"/>
</dbReference>
<dbReference type="EMBL" id="AP009048">
    <property type="protein sequence ID" value="BAA16569.2"/>
    <property type="molecule type" value="Genomic_DNA"/>
</dbReference>
<dbReference type="PIR" id="B65059">
    <property type="entry name" value="B65059"/>
</dbReference>
<dbReference type="RefSeq" id="NP_417254.4">
    <property type="nucleotide sequence ID" value="NC_000913.3"/>
</dbReference>
<dbReference type="RefSeq" id="WP_000021334.1">
    <property type="nucleotide sequence ID" value="NZ_LN832404.1"/>
</dbReference>
<dbReference type="SMR" id="P76633"/>
<dbReference type="BioGRID" id="4260745">
    <property type="interactions" value="11"/>
</dbReference>
<dbReference type="FunCoup" id="P76633">
    <property type="interactions" value="106"/>
</dbReference>
<dbReference type="STRING" id="511145.b2774"/>
<dbReference type="PaxDb" id="511145-b2774"/>
<dbReference type="EnsemblBacteria" id="AAC75816">
    <property type="protein sequence ID" value="AAC75816"/>
    <property type="gene ID" value="b2774"/>
</dbReference>
<dbReference type="GeneID" id="947232"/>
<dbReference type="KEGG" id="ecj:JW5443"/>
<dbReference type="KEGG" id="eco:b2774"/>
<dbReference type="KEGG" id="ecoc:C3026_15235"/>
<dbReference type="PATRIC" id="fig|1411691.4.peg.3964"/>
<dbReference type="EchoBASE" id="EB2930"/>
<dbReference type="eggNOG" id="COG1028">
    <property type="taxonomic scope" value="Bacteria"/>
</dbReference>
<dbReference type="HOGENOM" id="CLU_010194_1_1_6"/>
<dbReference type="InParanoid" id="P76633"/>
<dbReference type="OMA" id="MFEVNVY"/>
<dbReference type="OrthoDB" id="9803333at2"/>
<dbReference type="PhylomeDB" id="P76633"/>
<dbReference type="BioCyc" id="EcoCyc:G7440-MONOMER"/>
<dbReference type="PRO" id="PR:P76633"/>
<dbReference type="Proteomes" id="UP000000625">
    <property type="component" value="Chromosome"/>
</dbReference>
<dbReference type="GO" id="GO:0016616">
    <property type="term" value="F:oxidoreductase activity, acting on the CH-OH group of donors, NAD or NADP as acceptor"/>
    <property type="evidence" value="ECO:0000318"/>
    <property type="project" value="GO_Central"/>
</dbReference>
<dbReference type="GO" id="GO:0006974">
    <property type="term" value="P:DNA damage response"/>
    <property type="evidence" value="ECO:0000270"/>
    <property type="project" value="EcoliWiki"/>
</dbReference>
<dbReference type="CDD" id="cd05347">
    <property type="entry name" value="Ga5DH-like_SDR_c"/>
    <property type="match status" value="1"/>
</dbReference>
<dbReference type="FunFam" id="3.40.50.720:FF:000383">
    <property type="entry name" value="SDR family oxidoreductase"/>
    <property type="match status" value="1"/>
</dbReference>
<dbReference type="Gene3D" id="3.40.50.720">
    <property type="entry name" value="NAD(P)-binding Rossmann-like Domain"/>
    <property type="match status" value="1"/>
</dbReference>
<dbReference type="InterPro" id="IPR036291">
    <property type="entry name" value="NAD(P)-bd_dom_sf"/>
</dbReference>
<dbReference type="InterPro" id="IPR020904">
    <property type="entry name" value="Sc_DH/Rdtase_CS"/>
</dbReference>
<dbReference type="InterPro" id="IPR002347">
    <property type="entry name" value="SDR_fam"/>
</dbReference>
<dbReference type="PANTHER" id="PTHR42760:SF5">
    <property type="entry name" value="2-DEHYDRO-3-DEOXY-D-GLUCONATE 5-DEHYDROGENASE"/>
    <property type="match status" value="1"/>
</dbReference>
<dbReference type="PANTHER" id="PTHR42760">
    <property type="entry name" value="SHORT-CHAIN DEHYDROGENASES/REDUCTASES FAMILY MEMBER"/>
    <property type="match status" value="1"/>
</dbReference>
<dbReference type="Pfam" id="PF13561">
    <property type="entry name" value="adh_short_C2"/>
    <property type="match status" value="1"/>
</dbReference>
<dbReference type="PRINTS" id="PR00081">
    <property type="entry name" value="GDHRDH"/>
</dbReference>
<dbReference type="PRINTS" id="PR00080">
    <property type="entry name" value="SDRFAMILY"/>
</dbReference>
<dbReference type="SUPFAM" id="SSF51735">
    <property type="entry name" value="NAD(P)-binding Rossmann-fold domains"/>
    <property type="match status" value="1"/>
</dbReference>
<dbReference type="PROSITE" id="PS00061">
    <property type="entry name" value="ADH_SHORT"/>
    <property type="match status" value="1"/>
</dbReference>
<name>YGCW_ECOLI</name>
<comment type="similarity">
    <text evidence="3">Belongs to the short-chain dehydrogenases/reductases (SDR) family.</text>
</comment>
<comment type="sequence caution" evidence="3">
    <conflict type="erroneous initiation">
        <sequence resource="EMBL-CDS" id="AAA69285"/>
    </conflict>
    <text>Truncated N-terminus.</text>
</comment>